<feature type="chain" id="PRO_0000090988" description="Elongation factor 1-alpha">
    <location>
        <begin position="1"/>
        <end position="428"/>
    </location>
</feature>
<feature type="domain" description="tr-type G">
    <location>
        <begin position="5"/>
        <end position="217"/>
    </location>
</feature>
<feature type="region of interest" description="G1" evidence="1">
    <location>
        <begin position="14"/>
        <end position="21"/>
    </location>
</feature>
<feature type="region of interest" description="G2" evidence="1">
    <location>
        <begin position="68"/>
        <end position="72"/>
    </location>
</feature>
<feature type="region of interest" description="G3" evidence="1">
    <location>
        <begin position="89"/>
        <end position="92"/>
    </location>
</feature>
<feature type="region of interest" description="G4" evidence="1">
    <location>
        <begin position="144"/>
        <end position="147"/>
    </location>
</feature>
<feature type="region of interest" description="G5" evidence="1">
    <location>
        <begin position="181"/>
        <end position="183"/>
    </location>
</feature>
<feature type="binding site" evidence="2">
    <location>
        <begin position="14"/>
        <end position="21"/>
    </location>
    <ligand>
        <name>GTP</name>
        <dbReference type="ChEBI" id="CHEBI:37565"/>
    </ligand>
</feature>
<feature type="binding site" evidence="2">
    <location>
        <position position="21"/>
    </location>
    <ligand>
        <name>Mg(2+)</name>
        <dbReference type="ChEBI" id="CHEBI:18420"/>
    </ligand>
</feature>
<feature type="binding site" evidence="2">
    <location>
        <begin position="89"/>
        <end position="93"/>
    </location>
    <ligand>
        <name>GTP</name>
        <dbReference type="ChEBI" id="CHEBI:37565"/>
    </ligand>
</feature>
<feature type="binding site" evidence="2">
    <location>
        <begin position="144"/>
        <end position="147"/>
    </location>
    <ligand>
        <name>GTP</name>
        <dbReference type="ChEBI" id="CHEBI:37565"/>
    </ligand>
</feature>
<protein>
    <recommendedName>
        <fullName evidence="2">Elongation factor 1-alpha</fullName>
        <shortName evidence="2">EF-1-alpha</shortName>
        <ecNumber evidence="2">3.6.5.3</ecNumber>
    </recommendedName>
    <alternativeName>
        <fullName evidence="2">Elongation factor Tu</fullName>
        <shortName evidence="2">EF-Tu</shortName>
    </alternativeName>
</protein>
<accession>Q9V0V7</accession>
<accession>G8ZJE5</accession>
<evidence type="ECO:0000250" key="1"/>
<evidence type="ECO:0000255" key="2">
    <source>
        <dbReference type="HAMAP-Rule" id="MF_00118"/>
    </source>
</evidence>
<name>EF1A_PYRAB</name>
<reference key="1">
    <citation type="journal article" date="2003" name="Mol. Microbiol.">
        <title>An integrated analysis of the genome of the hyperthermophilic archaeon Pyrococcus abyssi.</title>
        <authorList>
            <person name="Cohen G.N."/>
            <person name="Barbe V."/>
            <person name="Flament D."/>
            <person name="Galperin M."/>
            <person name="Heilig R."/>
            <person name="Lecompte O."/>
            <person name="Poch O."/>
            <person name="Prieur D."/>
            <person name="Querellou J."/>
            <person name="Ripp R."/>
            <person name="Thierry J.-C."/>
            <person name="Van der Oost J."/>
            <person name="Weissenbach J."/>
            <person name="Zivanovic Y."/>
            <person name="Forterre P."/>
        </authorList>
    </citation>
    <scope>NUCLEOTIDE SEQUENCE [LARGE SCALE GENOMIC DNA]</scope>
    <source>
        <strain>GE5 / Orsay</strain>
    </source>
</reference>
<reference key="2">
    <citation type="journal article" date="2012" name="Curr. Microbiol.">
        <title>Re-annotation of two hyperthermophilic archaea Pyrococcus abyssi GE5 and Pyrococcus furiosus DSM 3638.</title>
        <authorList>
            <person name="Gao J."/>
            <person name="Wang J."/>
        </authorList>
    </citation>
    <scope>GENOME REANNOTATION</scope>
    <source>
        <strain>GE5 / Orsay</strain>
    </source>
</reference>
<comment type="function">
    <text evidence="2">GTP hydrolase that promotes the GTP-dependent binding of aminoacyl-tRNA to the A-site of ribosomes during protein biosynthesis.</text>
</comment>
<comment type="catalytic activity">
    <reaction evidence="2">
        <text>GTP + H2O = GDP + phosphate + H(+)</text>
        <dbReference type="Rhea" id="RHEA:19669"/>
        <dbReference type="ChEBI" id="CHEBI:15377"/>
        <dbReference type="ChEBI" id="CHEBI:15378"/>
        <dbReference type="ChEBI" id="CHEBI:37565"/>
        <dbReference type="ChEBI" id="CHEBI:43474"/>
        <dbReference type="ChEBI" id="CHEBI:58189"/>
        <dbReference type="EC" id="3.6.5.3"/>
    </reaction>
    <physiologicalReaction direction="left-to-right" evidence="2">
        <dbReference type="Rhea" id="RHEA:19670"/>
    </physiologicalReaction>
</comment>
<comment type="subcellular location">
    <subcellularLocation>
        <location evidence="2">Cytoplasm</location>
    </subcellularLocation>
</comment>
<comment type="similarity">
    <text evidence="2">Belongs to the TRAFAC class translation factor GTPase superfamily. Classic translation factor GTPase family. EF-Tu/EF-1A subfamily.</text>
</comment>
<sequence length="428" mass="47551">MPKEKPHVNIVFIGHVDHGKSTTIGRLLYDTGNIPETIIKKFEEMGEKGKSFKFAWVMDRLKEERERGITIDVAHTKFETPHRYITIIDAPGHRDFVKNMITGASQADAAVLVVAATDGVMPQTKEHAFLARTLGIKHIIVTINKMDMVNYDQKVFEKVKAQVEKLLRTLGYKDFPVIPTSAWNGDNIVKKSDKMPWYNGPTLIEALDQIPEPEKPVDKPLRIPIQDVYSIKGVGTVPVGRVETGKLKVGDVVIFEPASTIFHKPIQGEVKSIEMHHEPLQEALPGDNIGFNVRGVSKNDIKRGDVAGHPDKPPTVVRTKDTFKAQIIVLNHPTAITVGYSPVLHAHTAQVPVRFEQLLAKIDPRTGNITEENPQFIKTGDSAIVVLRPMKPVVLEPVKELPQLGRFAIRDMGMTIAAGMVISIQKGE</sequence>
<keyword id="KW-0963">Cytoplasm</keyword>
<keyword id="KW-0251">Elongation factor</keyword>
<keyword id="KW-0342">GTP-binding</keyword>
<keyword id="KW-0378">Hydrolase</keyword>
<keyword id="KW-0460">Magnesium</keyword>
<keyword id="KW-0479">Metal-binding</keyword>
<keyword id="KW-0547">Nucleotide-binding</keyword>
<keyword id="KW-0648">Protein biosynthesis</keyword>
<organism>
    <name type="scientific">Pyrococcus abyssi (strain GE5 / Orsay)</name>
    <dbReference type="NCBI Taxonomy" id="272844"/>
    <lineage>
        <taxon>Archaea</taxon>
        <taxon>Methanobacteriati</taxon>
        <taxon>Methanobacteriota</taxon>
        <taxon>Thermococci</taxon>
        <taxon>Thermococcales</taxon>
        <taxon>Thermococcaceae</taxon>
        <taxon>Pyrococcus</taxon>
    </lineage>
</organism>
<gene>
    <name evidence="2" type="primary">tuf</name>
    <name type="ordered locus">PYRAB06830</name>
    <name type="ORF">PAB0465</name>
</gene>
<proteinExistence type="inferred from homology"/>
<dbReference type="EC" id="3.6.5.3" evidence="2"/>
<dbReference type="EMBL" id="AJ248285">
    <property type="protein sequence ID" value="CAB49596.1"/>
    <property type="molecule type" value="Genomic_DNA"/>
</dbReference>
<dbReference type="EMBL" id="HE613800">
    <property type="protein sequence ID" value="CCE70072.1"/>
    <property type="molecule type" value="Genomic_DNA"/>
</dbReference>
<dbReference type="PIR" id="C75110">
    <property type="entry name" value="C75110"/>
</dbReference>
<dbReference type="RefSeq" id="WP_010867801.1">
    <property type="nucleotide sequence ID" value="NC_000868.1"/>
</dbReference>
<dbReference type="SMR" id="Q9V0V7"/>
<dbReference type="STRING" id="272844.PAB0465"/>
<dbReference type="KEGG" id="pab:PAB0465"/>
<dbReference type="PATRIC" id="fig|272844.11.peg.717"/>
<dbReference type="eggNOG" id="arCOG01561">
    <property type="taxonomic scope" value="Archaea"/>
</dbReference>
<dbReference type="HOGENOM" id="CLU_007265_3_5_2"/>
<dbReference type="OrthoDB" id="371718at2157"/>
<dbReference type="PhylomeDB" id="Q9V0V7"/>
<dbReference type="Proteomes" id="UP000000810">
    <property type="component" value="Chromosome"/>
</dbReference>
<dbReference type="Proteomes" id="UP000009139">
    <property type="component" value="Chromosome"/>
</dbReference>
<dbReference type="GO" id="GO:0005737">
    <property type="term" value="C:cytoplasm"/>
    <property type="evidence" value="ECO:0007669"/>
    <property type="project" value="UniProtKB-SubCell"/>
</dbReference>
<dbReference type="GO" id="GO:0005525">
    <property type="term" value="F:GTP binding"/>
    <property type="evidence" value="ECO:0007669"/>
    <property type="project" value="UniProtKB-UniRule"/>
</dbReference>
<dbReference type="GO" id="GO:0003924">
    <property type="term" value="F:GTPase activity"/>
    <property type="evidence" value="ECO:0007669"/>
    <property type="project" value="InterPro"/>
</dbReference>
<dbReference type="GO" id="GO:0003746">
    <property type="term" value="F:translation elongation factor activity"/>
    <property type="evidence" value="ECO:0007669"/>
    <property type="project" value="UniProtKB-UniRule"/>
</dbReference>
<dbReference type="CDD" id="cd01883">
    <property type="entry name" value="EF1_alpha"/>
    <property type="match status" value="1"/>
</dbReference>
<dbReference type="CDD" id="cd03693">
    <property type="entry name" value="EF1_alpha_II"/>
    <property type="match status" value="1"/>
</dbReference>
<dbReference type="CDD" id="cd03705">
    <property type="entry name" value="EF1_alpha_III"/>
    <property type="match status" value="1"/>
</dbReference>
<dbReference type="FunFam" id="2.40.30.10:FF:000003">
    <property type="entry name" value="Elongation factor 1-alpha"/>
    <property type="match status" value="1"/>
</dbReference>
<dbReference type="FunFam" id="2.40.30.10:FF:000005">
    <property type="entry name" value="Elongation factor 1-alpha"/>
    <property type="match status" value="1"/>
</dbReference>
<dbReference type="Gene3D" id="3.40.50.300">
    <property type="entry name" value="P-loop containing nucleotide triphosphate hydrolases"/>
    <property type="match status" value="1"/>
</dbReference>
<dbReference type="Gene3D" id="2.40.30.10">
    <property type="entry name" value="Translation factors"/>
    <property type="match status" value="2"/>
</dbReference>
<dbReference type="HAMAP" id="MF_00118_A">
    <property type="entry name" value="EF_Tu_A"/>
    <property type="match status" value="1"/>
</dbReference>
<dbReference type="InterPro" id="IPR004161">
    <property type="entry name" value="EFTu-like_2"/>
</dbReference>
<dbReference type="InterPro" id="IPR031157">
    <property type="entry name" value="G_TR_CS"/>
</dbReference>
<dbReference type="InterPro" id="IPR054696">
    <property type="entry name" value="GTP-eEF1A_C"/>
</dbReference>
<dbReference type="InterPro" id="IPR027417">
    <property type="entry name" value="P-loop_NTPase"/>
</dbReference>
<dbReference type="InterPro" id="IPR005225">
    <property type="entry name" value="Small_GTP-bd"/>
</dbReference>
<dbReference type="InterPro" id="IPR000795">
    <property type="entry name" value="T_Tr_GTP-bd_dom"/>
</dbReference>
<dbReference type="InterPro" id="IPR050100">
    <property type="entry name" value="TRAFAC_GTPase_members"/>
</dbReference>
<dbReference type="InterPro" id="IPR009000">
    <property type="entry name" value="Transl_B-barrel_sf"/>
</dbReference>
<dbReference type="InterPro" id="IPR009001">
    <property type="entry name" value="Transl_elong_EF1A/Init_IF2_C"/>
</dbReference>
<dbReference type="InterPro" id="IPR004539">
    <property type="entry name" value="Transl_elong_EF1A_euk/arc"/>
</dbReference>
<dbReference type="NCBIfam" id="TIGR00483">
    <property type="entry name" value="EF-1_alpha"/>
    <property type="match status" value="1"/>
</dbReference>
<dbReference type="NCBIfam" id="NF008969">
    <property type="entry name" value="PRK12317.1"/>
    <property type="match status" value="1"/>
</dbReference>
<dbReference type="NCBIfam" id="TIGR00231">
    <property type="entry name" value="small_GTP"/>
    <property type="match status" value="1"/>
</dbReference>
<dbReference type="PANTHER" id="PTHR23115">
    <property type="entry name" value="TRANSLATION FACTOR"/>
    <property type="match status" value="1"/>
</dbReference>
<dbReference type="Pfam" id="PF22594">
    <property type="entry name" value="GTP-eEF1A_C"/>
    <property type="match status" value="1"/>
</dbReference>
<dbReference type="Pfam" id="PF00009">
    <property type="entry name" value="GTP_EFTU"/>
    <property type="match status" value="1"/>
</dbReference>
<dbReference type="Pfam" id="PF03144">
    <property type="entry name" value="GTP_EFTU_D2"/>
    <property type="match status" value="1"/>
</dbReference>
<dbReference type="PRINTS" id="PR00315">
    <property type="entry name" value="ELONGATNFCT"/>
</dbReference>
<dbReference type="SUPFAM" id="SSF50465">
    <property type="entry name" value="EF-Tu/eEF-1alpha/eIF2-gamma C-terminal domain"/>
    <property type="match status" value="1"/>
</dbReference>
<dbReference type="SUPFAM" id="SSF52540">
    <property type="entry name" value="P-loop containing nucleoside triphosphate hydrolases"/>
    <property type="match status" value="1"/>
</dbReference>
<dbReference type="SUPFAM" id="SSF50447">
    <property type="entry name" value="Translation proteins"/>
    <property type="match status" value="1"/>
</dbReference>
<dbReference type="PROSITE" id="PS00301">
    <property type="entry name" value="G_TR_1"/>
    <property type="match status" value="1"/>
</dbReference>
<dbReference type="PROSITE" id="PS51722">
    <property type="entry name" value="G_TR_2"/>
    <property type="match status" value="1"/>
</dbReference>